<name>Y824_CLONN</name>
<evidence type="ECO:0000255" key="1">
    <source>
        <dbReference type="HAMAP-Rule" id="MF_00274"/>
    </source>
</evidence>
<protein>
    <recommendedName>
        <fullName evidence="1">Nucleoid-associated protein NT01CX_0824</fullName>
    </recommendedName>
</protein>
<keyword id="KW-0963">Cytoplasm</keyword>
<keyword id="KW-0238">DNA-binding</keyword>
<keyword id="KW-1185">Reference proteome</keyword>
<sequence length="114" mass="12186">MARGGFPGMGGGMNINNLMKQAQKMQQQMQKVQGELEEKEFVASAGGGAVTVKANGKKEILSINIEPDVVDPDDVEMLQDLILAACNQALKTADEETANEMKKLTGGLNMPGMF</sequence>
<feature type="chain" id="PRO_1000003729" description="Nucleoid-associated protein NT01CX_0824">
    <location>
        <begin position="1"/>
        <end position="114"/>
    </location>
</feature>
<dbReference type="EMBL" id="CP000382">
    <property type="protein sequence ID" value="ABK62659.1"/>
    <property type="molecule type" value="Genomic_DNA"/>
</dbReference>
<dbReference type="RefSeq" id="WP_011723238.1">
    <property type="nucleotide sequence ID" value="NC_008593.1"/>
</dbReference>
<dbReference type="SMR" id="A0Q3R4"/>
<dbReference type="STRING" id="386415.NT01CX_0824"/>
<dbReference type="KEGG" id="cno:NT01CX_0824"/>
<dbReference type="eggNOG" id="COG0718">
    <property type="taxonomic scope" value="Bacteria"/>
</dbReference>
<dbReference type="HOGENOM" id="CLU_140930_1_0_9"/>
<dbReference type="Proteomes" id="UP000008220">
    <property type="component" value="Chromosome"/>
</dbReference>
<dbReference type="GO" id="GO:0043590">
    <property type="term" value="C:bacterial nucleoid"/>
    <property type="evidence" value="ECO:0007669"/>
    <property type="project" value="UniProtKB-UniRule"/>
</dbReference>
<dbReference type="GO" id="GO:0005829">
    <property type="term" value="C:cytosol"/>
    <property type="evidence" value="ECO:0007669"/>
    <property type="project" value="TreeGrafter"/>
</dbReference>
<dbReference type="GO" id="GO:0003677">
    <property type="term" value="F:DNA binding"/>
    <property type="evidence" value="ECO:0007669"/>
    <property type="project" value="UniProtKB-UniRule"/>
</dbReference>
<dbReference type="FunFam" id="3.30.1310.10:FF:000002">
    <property type="entry name" value="Nucleoid-associated protein IKC_06587"/>
    <property type="match status" value="1"/>
</dbReference>
<dbReference type="Gene3D" id="3.30.1310.10">
    <property type="entry name" value="Nucleoid-associated protein YbaB-like domain"/>
    <property type="match status" value="1"/>
</dbReference>
<dbReference type="HAMAP" id="MF_00274">
    <property type="entry name" value="DNA_YbaB_EbfC"/>
    <property type="match status" value="1"/>
</dbReference>
<dbReference type="InterPro" id="IPR036894">
    <property type="entry name" value="YbaB-like_sf"/>
</dbReference>
<dbReference type="InterPro" id="IPR004401">
    <property type="entry name" value="YbaB/EbfC"/>
</dbReference>
<dbReference type="NCBIfam" id="TIGR00103">
    <property type="entry name" value="DNA_YbaB_EbfC"/>
    <property type="match status" value="1"/>
</dbReference>
<dbReference type="PANTHER" id="PTHR33449">
    <property type="entry name" value="NUCLEOID-ASSOCIATED PROTEIN YBAB"/>
    <property type="match status" value="1"/>
</dbReference>
<dbReference type="PANTHER" id="PTHR33449:SF1">
    <property type="entry name" value="NUCLEOID-ASSOCIATED PROTEIN YBAB"/>
    <property type="match status" value="1"/>
</dbReference>
<dbReference type="Pfam" id="PF02575">
    <property type="entry name" value="YbaB_DNA_bd"/>
    <property type="match status" value="1"/>
</dbReference>
<dbReference type="PIRSF" id="PIRSF004555">
    <property type="entry name" value="UCP004555"/>
    <property type="match status" value="1"/>
</dbReference>
<dbReference type="SUPFAM" id="SSF82607">
    <property type="entry name" value="YbaB-like"/>
    <property type="match status" value="1"/>
</dbReference>
<comment type="function">
    <text evidence="1">Binds to DNA and alters its conformation. May be involved in regulation of gene expression, nucleoid organization and DNA protection.</text>
</comment>
<comment type="subunit">
    <text evidence="1">Homodimer.</text>
</comment>
<comment type="subcellular location">
    <subcellularLocation>
        <location evidence="1">Cytoplasm</location>
        <location evidence="1">Nucleoid</location>
    </subcellularLocation>
</comment>
<comment type="similarity">
    <text evidence="1">Belongs to the YbaB/EbfC family.</text>
</comment>
<gene>
    <name type="ordered locus">NT01CX_0824</name>
</gene>
<accession>A0Q3R4</accession>
<organism>
    <name type="scientific">Clostridium novyi (strain NT)</name>
    <dbReference type="NCBI Taxonomy" id="386415"/>
    <lineage>
        <taxon>Bacteria</taxon>
        <taxon>Bacillati</taxon>
        <taxon>Bacillota</taxon>
        <taxon>Clostridia</taxon>
        <taxon>Eubacteriales</taxon>
        <taxon>Clostridiaceae</taxon>
        <taxon>Clostridium</taxon>
    </lineage>
</organism>
<proteinExistence type="inferred from homology"/>
<reference key="1">
    <citation type="journal article" date="2006" name="Nat. Biotechnol.">
        <title>The genome and transcriptomes of the anti-tumor agent Clostridium novyi-NT.</title>
        <authorList>
            <person name="Bettegowda C."/>
            <person name="Huang X."/>
            <person name="Lin J."/>
            <person name="Cheong I."/>
            <person name="Kohli M."/>
            <person name="Szabo S.A."/>
            <person name="Zhang X."/>
            <person name="Diaz L.A. Jr."/>
            <person name="Velculescu V.E."/>
            <person name="Parmigiani G."/>
            <person name="Kinzler K.W."/>
            <person name="Vogelstein B."/>
            <person name="Zhou S."/>
        </authorList>
    </citation>
    <scope>NUCLEOTIDE SEQUENCE [LARGE SCALE GENOMIC DNA]</scope>
    <source>
        <strain>NT</strain>
    </source>
</reference>